<protein>
    <recommendedName>
        <fullName>Septin-11</fullName>
    </recommendedName>
</protein>
<gene>
    <name evidence="11" type="primary">Septin11</name>
    <name evidence="11" type="synonym">D5Ertd606e</name>
    <name evidence="11" type="synonym">Sept11</name>
</gene>
<sequence length="431" mass="49695">MAVAVGRPSNEELRNLSLSGHVGFDSLPDQLVNKSTSQGFCFNILCVGETGIGKSTLMDTLFNTKFESDPATHNEPGVRLKARSYELQESNVRLKLTIVDTVGFGDQINKDDSYKPIVEYIDAQFEAYLQEELKIKRSLFNYHDTRIHACLYFIAPTGHSLKSLDLVTMKKLDSKVNIIPIIAKADTIAKNELHKFKSKIMSELVSNGVQIYQFPTDEETVAEINATMSVHLPFAVVGSTEEVKIGNKMAKARQYPWGVVQVENENHCDFVKLREMLIRVNMEDLREQTHTRHYELYRRCKLEEMGFKDTDPDSKPFSLQETYEAKRNEFLGELQKKEEEMRQMFVMRVKEKEAELKEAEKELHEKFDLLKRTHQEEKKKVEDKKKELEEEVSNFQKKKAAAQLLQSQAQQSGAQQTKKDKDKKNPWLCTE</sequence>
<feature type="initiator methionine" description="Removed" evidence="2">
    <location>
        <position position="1"/>
    </location>
</feature>
<feature type="chain" id="PRO_0000173543" description="Septin-11">
    <location>
        <begin position="2"/>
        <end position="431"/>
    </location>
</feature>
<feature type="domain" description="Septin-type G" evidence="4">
    <location>
        <begin position="38"/>
        <end position="304"/>
    </location>
</feature>
<feature type="region of interest" description="G1 motif" evidence="4">
    <location>
        <begin position="48"/>
        <end position="55"/>
    </location>
</feature>
<feature type="region of interest" description="G3 motif" evidence="4">
    <location>
        <begin position="100"/>
        <end position="103"/>
    </location>
</feature>
<feature type="region of interest" description="G4 motif" evidence="4">
    <location>
        <begin position="183"/>
        <end position="186"/>
    </location>
</feature>
<feature type="region of interest" description="Disordered" evidence="5">
    <location>
        <begin position="400"/>
        <end position="431"/>
    </location>
</feature>
<feature type="coiled-coil region" evidence="3">
    <location>
        <begin position="320"/>
        <end position="413"/>
    </location>
</feature>
<feature type="compositionally biased region" description="Low complexity" evidence="5">
    <location>
        <begin position="401"/>
        <end position="416"/>
    </location>
</feature>
<feature type="binding site" evidence="1">
    <location>
        <begin position="48"/>
        <end position="55"/>
    </location>
    <ligand>
        <name>GTP</name>
        <dbReference type="ChEBI" id="CHEBI:37565"/>
    </ligand>
</feature>
<feature type="binding site" evidence="1">
    <location>
        <position position="103"/>
    </location>
    <ligand>
        <name>GTP</name>
        <dbReference type="ChEBI" id="CHEBI:37565"/>
    </ligand>
</feature>
<feature type="binding site" evidence="1">
    <location>
        <begin position="184"/>
        <end position="192"/>
    </location>
    <ligand>
        <name>GTP</name>
        <dbReference type="ChEBI" id="CHEBI:37565"/>
    </ligand>
</feature>
<feature type="binding site" evidence="1">
    <location>
        <position position="238"/>
    </location>
    <ligand>
        <name>GTP</name>
        <dbReference type="ChEBI" id="CHEBI:37565"/>
    </ligand>
</feature>
<feature type="binding site" evidence="1">
    <location>
        <position position="253"/>
    </location>
    <ligand>
        <name>GTP</name>
        <dbReference type="ChEBI" id="CHEBI:37565"/>
    </ligand>
</feature>
<feature type="modified residue" description="N-acetylalanine" evidence="2">
    <location>
        <position position="2"/>
    </location>
</feature>
<feature type="modified residue" description="Phosphoserine" evidence="2">
    <location>
        <position position="9"/>
    </location>
</feature>
<feature type="splice variant" id="VSP_011041" description="In isoform 2." evidence="8 9">
    <original>PWLCTE</original>
    <variation>ASFA</variation>
    <location>
        <begin position="426"/>
        <end position="431"/>
    </location>
</feature>
<feature type="splice variant" id="VSP_011042" description="In isoform 3." evidence="8 9">
    <location>
        <begin position="426"/>
        <end position="431"/>
    </location>
</feature>
<feature type="sequence conflict" description="In Ref. 1; BAC25969." evidence="10" ref="1">
    <original>K</original>
    <variation>N</variation>
    <location>
        <position position="171"/>
    </location>
</feature>
<feature type="sequence conflict" description="In Ref. 1; BAE42414." evidence="10" ref="1">
    <original>K</original>
    <variation>T</variation>
    <location>
        <position position="418"/>
    </location>
</feature>
<feature type="sequence conflict" description="In Ref. 1; BAE42414." evidence="10" ref="1">
    <original>N</original>
    <variation>K</variation>
    <location>
        <position position="425"/>
    </location>
</feature>
<keyword id="KW-0007">Acetylation</keyword>
<keyword id="KW-0025">Alternative splicing</keyword>
<keyword id="KW-0131">Cell cycle</keyword>
<keyword id="KW-0132">Cell division</keyword>
<keyword id="KW-0966">Cell projection</keyword>
<keyword id="KW-0175">Coiled coil</keyword>
<keyword id="KW-0963">Cytoplasm</keyword>
<keyword id="KW-0206">Cytoskeleton</keyword>
<keyword id="KW-0903">Direct protein sequencing</keyword>
<keyword id="KW-0342">GTP-binding</keyword>
<keyword id="KW-0547">Nucleotide-binding</keyword>
<keyword id="KW-0597">Phosphoprotein</keyword>
<keyword id="KW-1185">Reference proteome</keyword>
<keyword id="KW-0770">Synapse</keyword>
<evidence type="ECO:0000250" key="1"/>
<evidence type="ECO:0000250" key="2">
    <source>
        <dbReference type="UniProtKB" id="Q9NVA2"/>
    </source>
</evidence>
<evidence type="ECO:0000255" key="3"/>
<evidence type="ECO:0000255" key="4">
    <source>
        <dbReference type="PROSITE-ProRule" id="PRU01056"/>
    </source>
</evidence>
<evidence type="ECO:0000256" key="5">
    <source>
        <dbReference type="SAM" id="MobiDB-lite"/>
    </source>
</evidence>
<evidence type="ECO:0000269" key="6">
    <source>
    </source>
</evidence>
<evidence type="ECO:0000269" key="7">
    <source>
    </source>
</evidence>
<evidence type="ECO:0000303" key="8">
    <source>
    </source>
</evidence>
<evidence type="ECO:0000303" key="9">
    <source>
    </source>
</evidence>
<evidence type="ECO:0000305" key="10"/>
<evidence type="ECO:0000312" key="11">
    <source>
        <dbReference type="MGI" id="MGI:1277214"/>
    </source>
</evidence>
<comment type="function">
    <text evidence="1 10">Filament-forming cytoskeletal GTPase. May play a role in cytokinesis (Potential). May play a role in the cytoarchitecture of neurons, including dendritic arborization and dendritic spines, and in GABAergic synaptic connectivity (By similarity).</text>
</comment>
<comment type="subunit">
    <text evidence="2">Septins polymerize into heterooligomeric protein complexes that form filaments, and can associate with cellular membranes, actin filaments and microtubules (By similarity). Forms homooligomers (By similarity). GTPase activity is required for filament formation (By similarity). Interacts with SEPTIN7, SEPTIN9 and SEPTIN12 (By similarity).</text>
</comment>
<comment type="subcellular location">
    <subcellularLocation>
        <location evidence="6">Cytoplasm</location>
    </subcellularLocation>
    <subcellularLocation>
        <location evidence="6">Cytoplasm</location>
        <location evidence="6">Cytoskeleton</location>
    </subcellularLocation>
    <subcellularLocation>
        <location evidence="6">Synapse</location>
    </subcellularLocation>
    <subcellularLocation>
        <location evidence="6">Cell projection</location>
        <location evidence="6">Dendritic spine</location>
    </subcellularLocation>
    <subcellularLocation>
        <location evidence="1">Cell projection</location>
        <location evidence="1">Axon</location>
    </subcellularLocation>
</comment>
<comment type="alternative products">
    <event type="alternative splicing"/>
    <isoform>
        <id>Q8C1B7-1</id>
        <name>1</name>
        <sequence type="displayed"/>
    </isoform>
    <isoform>
        <id>Q8C1B7-2</id>
        <name>2</name>
        <sequence type="described" ref="VSP_011041"/>
    </isoform>
    <isoform>
        <id>Q8C1B7-3</id>
        <name>3</name>
        <sequence type="described" ref="VSP_011042"/>
    </isoform>
</comment>
<comment type="tissue specificity">
    <text evidence="7">Expressed in the cerebral cortex (at protein level).</text>
</comment>
<comment type="similarity">
    <text evidence="4">Belongs to the TRAFAC class TrmE-Era-EngA-EngB-Septin-like GTPase superfamily. Septin GTPase family.</text>
</comment>
<accession>Q8C1B7</accession>
<accession>Q3TBA0</accession>
<accession>Q3TC24</accession>
<accession>Q5D0F0</accession>
<accession>Q6P2K5</accession>
<accession>Q6P6I0</accession>
<dbReference type="EMBL" id="AK028475">
    <property type="protein sequence ID" value="BAC25969.1"/>
    <property type="molecule type" value="mRNA"/>
</dbReference>
<dbReference type="EMBL" id="AK166517">
    <property type="protein sequence ID" value="BAE38822.1"/>
    <property type="molecule type" value="mRNA"/>
</dbReference>
<dbReference type="EMBL" id="AK170945">
    <property type="protein sequence ID" value="BAE42133.1"/>
    <property type="molecule type" value="mRNA"/>
</dbReference>
<dbReference type="EMBL" id="AK171368">
    <property type="protein sequence ID" value="BAE42414.1"/>
    <property type="molecule type" value="mRNA"/>
</dbReference>
<dbReference type="EMBL" id="BC031456">
    <property type="protein sequence ID" value="AAH31456.1"/>
    <property type="molecule type" value="mRNA"/>
</dbReference>
<dbReference type="EMBL" id="BC062206">
    <property type="protein sequence ID" value="AAH62206.1"/>
    <property type="molecule type" value="mRNA"/>
</dbReference>
<dbReference type="EMBL" id="BC064466">
    <property type="protein sequence ID" value="AAH64466.1"/>
    <property type="molecule type" value="mRNA"/>
</dbReference>
<dbReference type="CCDS" id="CCDS51549.1">
    <molecule id="Q8C1B7-2"/>
</dbReference>
<dbReference type="CCDS" id="CCDS80331.1">
    <molecule id="Q8C1B7-1"/>
</dbReference>
<dbReference type="CCDS" id="CCDS80332.1">
    <molecule id="Q8C1B7-3"/>
</dbReference>
<dbReference type="RefSeq" id="NP_001009818.1">
    <molecule id="Q8C1B7-2"/>
    <property type="nucleotide sequence ID" value="NM_001009818.2"/>
</dbReference>
<dbReference type="RefSeq" id="NP_001297598.1">
    <molecule id="Q8C1B7-1"/>
    <property type="nucleotide sequence ID" value="NM_001310669.1"/>
</dbReference>
<dbReference type="RefSeq" id="NP_001297600.1">
    <molecule id="Q8C1B7-3"/>
    <property type="nucleotide sequence ID" value="NM_001310671.1"/>
</dbReference>
<dbReference type="RefSeq" id="XP_030110550.1">
    <molecule id="Q8C1B7-1"/>
    <property type="nucleotide sequence ID" value="XM_030254690.2"/>
</dbReference>
<dbReference type="RefSeq" id="XP_036021184.1">
    <molecule id="Q8C1B7-1"/>
    <property type="nucleotide sequence ID" value="XM_036165291.1"/>
</dbReference>
<dbReference type="SMR" id="Q8C1B7"/>
<dbReference type="BioGRID" id="206563">
    <property type="interactions" value="33"/>
</dbReference>
<dbReference type="FunCoup" id="Q8C1B7">
    <property type="interactions" value="1832"/>
</dbReference>
<dbReference type="IntAct" id="Q8C1B7">
    <property type="interactions" value="19"/>
</dbReference>
<dbReference type="MINT" id="Q8C1B7"/>
<dbReference type="STRING" id="10090.ENSMUSP00000144235"/>
<dbReference type="GlyGen" id="Q8C1B7">
    <property type="glycosylation" value="1 site, 1 O-linked glycan (1 site)"/>
</dbReference>
<dbReference type="iPTMnet" id="Q8C1B7"/>
<dbReference type="PhosphoSitePlus" id="Q8C1B7"/>
<dbReference type="SwissPalm" id="Q8C1B7"/>
<dbReference type="jPOST" id="Q8C1B7"/>
<dbReference type="PaxDb" id="10090-ENSMUSP00000074293"/>
<dbReference type="PeptideAtlas" id="Q8C1B7"/>
<dbReference type="ProteomicsDB" id="256548">
    <molecule id="Q8C1B7-1"/>
</dbReference>
<dbReference type="ProteomicsDB" id="256549">
    <molecule id="Q8C1B7-2"/>
</dbReference>
<dbReference type="ProteomicsDB" id="256550">
    <molecule id="Q8C1B7-3"/>
</dbReference>
<dbReference type="Pumba" id="Q8C1B7"/>
<dbReference type="Antibodypedia" id="24838">
    <property type="antibodies" value="200 antibodies from 29 providers"/>
</dbReference>
<dbReference type="DNASU" id="52398"/>
<dbReference type="Ensembl" id="ENSMUST00000074733.11">
    <molecule id="Q8C1B7-2"/>
    <property type="protein sequence ID" value="ENSMUSP00000074293.8"/>
    <property type="gene ID" value="ENSMUSG00000058013.12"/>
</dbReference>
<dbReference type="Ensembl" id="ENSMUST00000201421.4">
    <molecule id="Q8C1B7-1"/>
    <property type="protein sequence ID" value="ENSMUSP00000143928.2"/>
    <property type="gene ID" value="ENSMUSG00000058013.12"/>
</dbReference>
<dbReference type="Ensembl" id="ENSMUST00000202308.4">
    <molecule id="Q8C1B7-3"/>
    <property type="protein sequence ID" value="ENSMUSP00000144136.2"/>
    <property type="gene ID" value="ENSMUSG00000058013.12"/>
</dbReference>
<dbReference type="GeneID" id="52398"/>
<dbReference type="KEGG" id="mmu:52398"/>
<dbReference type="UCSC" id="uc008ydx.1">
    <molecule id="Q8C1B7-1"/>
    <property type="organism name" value="mouse"/>
</dbReference>
<dbReference type="UCSC" id="uc008ydy.1">
    <molecule id="Q8C1B7-2"/>
    <property type="organism name" value="mouse"/>
</dbReference>
<dbReference type="AGR" id="MGI:1277214"/>
<dbReference type="CTD" id="55752"/>
<dbReference type="MGI" id="MGI:1277214">
    <property type="gene designation" value="Septin11"/>
</dbReference>
<dbReference type="VEuPathDB" id="HostDB:ENSMUSG00000058013"/>
<dbReference type="eggNOG" id="KOG3859">
    <property type="taxonomic scope" value="Eukaryota"/>
</dbReference>
<dbReference type="GeneTree" id="ENSGT00940000160196"/>
<dbReference type="InParanoid" id="Q8C1B7"/>
<dbReference type="OMA" id="RNRTIMA"/>
<dbReference type="OrthoDB" id="416553at2759"/>
<dbReference type="PhylomeDB" id="Q8C1B7"/>
<dbReference type="TreeFam" id="TF101080"/>
<dbReference type="BioGRID-ORCS" id="52398">
    <property type="hits" value="1 hit in 51 CRISPR screens"/>
</dbReference>
<dbReference type="CD-CODE" id="CE726F99">
    <property type="entry name" value="Postsynaptic density"/>
</dbReference>
<dbReference type="ChiTaRS" id="Sept11">
    <property type="organism name" value="mouse"/>
</dbReference>
<dbReference type="PRO" id="PR:Q8C1B7"/>
<dbReference type="Proteomes" id="UP000000589">
    <property type="component" value="Chromosome 5"/>
</dbReference>
<dbReference type="RNAct" id="Q8C1B7">
    <property type="molecule type" value="protein"/>
</dbReference>
<dbReference type="Bgee" id="ENSMUSG00000058013">
    <property type="expression patterns" value="Expressed in gonadal ridge and 243 other cell types or tissues"/>
</dbReference>
<dbReference type="ExpressionAtlas" id="Q8C1B7">
    <property type="expression patterns" value="baseline and differential"/>
</dbReference>
<dbReference type="GO" id="GO:0030424">
    <property type="term" value="C:axon"/>
    <property type="evidence" value="ECO:0007669"/>
    <property type="project" value="UniProtKB-SubCell"/>
</dbReference>
<dbReference type="GO" id="GO:0043197">
    <property type="term" value="C:dendritic spine"/>
    <property type="evidence" value="ECO:0007669"/>
    <property type="project" value="UniProtKB-SubCell"/>
</dbReference>
<dbReference type="GO" id="GO:0031105">
    <property type="term" value="C:septin complex"/>
    <property type="evidence" value="ECO:0000314"/>
    <property type="project" value="UniProtKB"/>
</dbReference>
<dbReference type="GO" id="GO:0005525">
    <property type="term" value="F:GTP binding"/>
    <property type="evidence" value="ECO:0007669"/>
    <property type="project" value="UniProtKB-KW"/>
</dbReference>
<dbReference type="GO" id="GO:0051301">
    <property type="term" value="P:cell division"/>
    <property type="evidence" value="ECO:0007669"/>
    <property type="project" value="UniProtKB-KW"/>
</dbReference>
<dbReference type="CDD" id="cd01850">
    <property type="entry name" value="CDC_Septin"/>
    <property type="match status" value="1"/>
</dbReference>
<dbReference type="FunFam" id="3.40.50.300:FF:000036">
    <property type="entry name" value="septin-6 isoform X2"/>
    <property type="match status" value="1"/>
</dbReference>
<dbReference type="Gene3D" id="3.40.50.300">
    <property type="entry name" value="P-loop containing nucleotide triphosphate hydrolases"/>
    <property type="match status" value="1"/>
</dbReference>
<dbReference type="InterPro" id="IPR030379">
    <property type="entry name" value="G_SEPTIN_dom"/>
</dbReference>
<dbReference type="InterPro" id="IPR027417">
    <property type="entry name" value="P-loop_NTPase"/>
</dbReference>
<dbReference type="InterPro" id="IPR016491">
    <property type="entry name" value="Septin"/>
</dbReference>
<dbReference type="PANTHER" id="PTHR18884">
    <property type="entry name" value="SEPTIN"/>
    <property type="match status" value="1"/>
</dbReference>
<dbReference type="Pfam" id="PF00735">
    <property type="entry name" value="Septin"/>
    <property type="match status" value="1"/>
</dbReference>
<dbReference type="PIRSF" id="PIRSF006698">
    <property type="entry name" value="Septin"/>
    <property type="match status" value="1"/>
</dbReference>
<dbReference type="SUPFAM" id="SSF52540">
    <property type="entry name" value="P-loop containing nucleoside triphosphate hydrolases"/>
    <property type="match status" value="1"/>
</dbReference>
<dbReference type="PROSITE" id="PS51719">
    <property type="entry name" value="G_SEPTIN"/>
    <property type="match status" value="1"/>
</dbReference>
<reference key="1">
    <citation type="journal article" date="2005" name="Science">
        <title>The transcriptional landscape of the mammalian genome.</title>
        <authorList>
            <person name="Carninci P."/>
            <person name="Kasukawa T."/>
            <person name="Katayama S."/>
            <person name="Gough J."/>
            <person name="Frith M.C."/>
            <person name="Maeda N."/>
            <person name="Oyama R."/>
            <person name="Ravasi T."/>
            <person name="Lenhard B."/>
            <person name="Wells C."/>
            <person name="Kodzius R."/>
            <person name="Shimokawa K."/>
            <person name="Bajic V.B."/>
            <person name="Brenner S.E."/>
            <person name="Batalov S."/>
            <person name="Forrest A.R."/>
            <person name="Zavolan M."/>
            <person name="Davis M.J."/>
            <person name="Wilming L.G."/>
            <person name="Aidinis V."/>
            <person name="Allen J.E."/>
            <person name="Ambesi-Impiombato A."/>
            <person name="Apweiler R."/>
            <person name="Aturaliya R.N."/>
            <person name="Bailey T.L."/>
            <person name="Bansal M."/>
            <person name="Baxter L."/>
            <person name="Beisel K.W."/>
            <person name="Bersano T."/>
            <person name="Bono H."/>
            <person name="Chalk A.M."/>
            <person name="Chiu K.P."/>
            <person name="Choudhary V."/>
            <person name="Christoffels A."/>
            <person name="Clutterbuck D.R."/>
            <person name="Crowe M.L."/>
            <person name="Dalla E."/>
            <person name="Dalrymple B.P."/>
            <person name="de Bono B."/>
            <person name="Della Gatta G."/>
            <person name="di Bernardo D."/>
            <person name="Down T."/>
            <person name="Engstrom P."/>
            <person name="Fagiolini M."/>
            <person name="Faulkner G."/>
            <person name="Fletcher C.F."/>
            <person name="Fukushima T."/>
            <person name="Furuno M."/>
            <person name="Futaki S."/>
            <person name="Gariboldi M."/>
            <person name="Georgii-Hemming P."/>
            <person name="Gingeras T.R."/>
            <person name="Gojobori T."/>
            <person name="Green R.E."/>
            <person name="Gustincich S."/>
            <person name="Harbers M."/>
            <person name="Hayashi Y."/>
            <person name="Hensch T.K."/>
            <person name="Hirokawa N."/>
            <person name="Hill D."/>
            <person name="Huminiecki L."/>
            <person name="Iacono M."/>
            <person name="Ikeo K."/>
            <person name="Iwama A."/>
            <person name="Ishikawa T."/>
            <person name="Jakt M."/>
            <person name="Kanapin A."/>
            <person name="Katoh M."/>
            <person name="Kawasawa Y."/>
            <person name="Kelso J."/>
            <person name="Kitamura H."/>
            <person name="Kitano H."/>
            <person name="Kollias G."/>
            <person name="Krishnan S.P."/>
            <person name="Kruger A."/>
            <person name="Kummerfeld S.K."/>
            <person name="Kurochkin I.V."/>
            <person name="Lareau L.F."/>
            <person name="Lazarevic D."/>
            <person name="Lipovich L."/>
            <person name="Liu J."/>
            <person name="Liuni S."/>
            <person name="McWilliam S."/>
            <person name="Madan Babu M."/>
            <person name="Madera M."/>
            <person name="Marchionni L."/>
            <person name="Matsuda H."/>
            <person name="Matsuzawa S."/>
            <person name="Miki H."/>
            <person name="Mignone F."/>
            <person name="Miyake S."/>
            <person name="Morris K."/>
            <person name="Mottagui-Tabar S."/>
            <person name="Mulder N."/>
            <person name="Nakano N."/>
            <person name="Nakauchi H."/>
            <person name="Ng P."/>
            <person name="Nilsson R."/>
            <person name="Nishiguchi S."/>
            <person name="Nishikawa S."/>
            <person name="Nori F."/>
            <person name="Ohara O."/>
            <person name="Okazaki Y."/>
            <person name="Orlando V."/>
            <person name="Pang K.C."/>
            <person name="Pavan W.J."/>
            <person name="Pavesi G."/>
            <person name="Pesole G."/>
            <person name="Petrovsky N."/>
            <person name="Piazza S."/>
            <person name="Reed J."/>
            <person name="Reid J.F."/>
            <person name="Ring B.Z."/>
            <person name="Ringwald M."/>
            <person name="Rost B."/>
            <person name="Ruan Y."/>
            <person name="Salzberg S.L."/>
            <person name="Sandelin A."/>
            <person name="Schneider C."/>
            <person name="Schoenbach C."/>
            <person name="Sekiguchi K."/>
            <person name="Semple C.A."/>
            <person name="Seno S."/>
            <person name="Sessa L."/>
            <person name="Sheng Y."/>
            <person name="Shibata Y."/>
            <person name="Shimada H."/>
            <person name="Shimada K."/>
            <person name="Silva D."/>
            <person name="Sinclair B."/>
            <person name="Sperling S."/>
            <person name="Stupka E."/>
            <person name="Sugiura K."/>
            <person name="Sultana R."/>
            <person name="Takenaka Y."/>
            <person name="Taki K."/>
            <person name="Tammoja K."/>
            <person name="Tan S.L."/>
            <person name="Tang S."/>
            <person name="Taylor M.S."/>
            <person name="Tegner J."/>
            <person name="Teichmann S.A."/>
            <person name="Ueda H.R."/>
            <person name="van Nimwegen E."/>
            <person name="Verardo R."/>
            <person name="Wei C.L."/>
            <person name="Yagi K."/>
            <person name="Yamanishi H."/>
            <person name="Zabarovsky E."/>
            <person name="Zhu S."/>
            <person name="Zimmer A."/>
            <person name="Hide W."/>
            <person name="Bult C."/>
            <person name="Grimmond S.M."/>
            <person name="Teasdale R.D."/>
            <person name="Liu E.T."/>
            <person name="Brusic V."/>
            <person name="Quackenbush J."/>
            <person name="Wahlestedt C."/>
            <person name="Mattick J.S."/>
            <person name="Hume D.A."/>
            <person name="Kai C."/>
            <person name="Sasaki D."/>
            <person name="Tomaru Y."/>
            <person name="Fukuda S."/>
            <person name="Kanamori-Katayama M."/>
            <person name="Suzuki M."/>
            <person name="Aoki J."/>
            <person name="Arakawa T."/>
            <person name="Iida J."/>
            <person name="Imamura K."/>
            <person name="Itoh M."/>
            <person name="Kato T."/>
            <person name="Kawaji H."/>
            <person name="Kawagashira N."/>
            <person name="Kawashima T."/>
            <person name="Kojima M."/>
            <person name="Kondo S."/>
            <person name="Konno H."/>
            <person name="Nakano K."/>
            <person name="Ninomiya N."/>
            <person name="Nishio T."/>
            <person name="Okada M."/>
            <person name="Plessy C."/>
            <person name="Shibata K."/>
            <person name="Shiraki T."/>
            <person name="Suzuki S."/>
            <person name="Tagami M."/>
            <person name="Waki K."/>
            <person name="Watahiki A."/>
            <person name="Okamura-Oho Y."/>
            <person name="Suzuki H."/>
            <person name="Kawai J."/>
            <person name="Hayashizaki Y."/>
        </authorList>
    </citation>
    <scope>NUCLEOTIDE SEQUENCE [LARGE SCALE MRNA] (ISOFORMS 1; 2 AND 3)</scope>
    <source>
        <strain>C57BL/6J</strain>
        <strain>NOD</strain>
        <tissue>Mammary gland</tissue>
        <tissue>Skin</tissue>
    </source>
</reference>
<reference key="2">
    <citation type="journal article" date="2004" name="Genome Res.">
        <title>The status, quality, and expansion of the NIH full-length cDNA project: the Mammalian Gene Collection (MGC).</title>
        <authorList>
            <consortium name="The MGC Project Team"/>
        </authorList>
    </citation>
    <scope>NUCLEOTIDE SEQUENCE [LARGE SCALE MRNA] (ISOFORMS 2 AND 3)</scope>
    <source>
        <strain>C57BL/6J</strain>
        <strain>FVB/N</strain>
        <tissue>Brain</tissue>
        <tissue>Mammary tumor</tissue>
    </source>
</reference>
<reference key="3">
    <citation type="submission" date="2009-01" db="UniProtKB">
        <authorList>
            <person name="Lubec G."/>
            <person name="Kang S.U."/>
            <person name="Klug S."/>
            <person name="Sunyer B."/>
            <person name="Chen W.-Q."/>
        </authorList>
    </citation>
    <scope>PROTEIN SEQUENCE OF 15-79; 84-93; 96-110; 138-146; 163-170; 176-184; 280-286; 293-298; 309-336; 387-397 AND 399-418</scope>
    <scope>IDENTIFICATION BY MASS SPECTROMETRY</scope>
    <source>
        <strain>C57BL/6J</strain>
        <strain>OF1</strain>
        <tissue>Brain</tissue>
        <tissue>Hippocampus</tissue>
    </source>
</reference>
<reference key="4">
    <citation type="journal article" date="2007" name="Hum. Mutat.">
        <title>SEPT9 sequence alternations causing hereditary neuralgic amyotrophy are associated with altered interactions with SEPT4/SEPT11 and resistance to Rho/Rhotekin-signaling.</title>
        <authorList>
            <person name="Sudo K."/>
            <person name="Ito H."/>
            <person name="Iwamoto I."/>
            <person name="Morishita R."/>
            <person name="Asano T."/>
            <person name="Nagata K."/>
        </authorList>
    </citation>
    <scope>SUBCELLULAR LOCATION</scope>
</reference>
<reference key="5">
    <citation type="journal article" date="2010" name="Cell">
        <title>A tissue-specific atlas of mouse protein phosphorylation and expression.</title>
        <authorList>
            <person name="Huttlin E.L."/>
            <person name="Jedrychowski M.P."/>
            <person name="Elias J.E."/>
            <person name="Goswami T."/>
            <person name="Rad R."/>
            <person name="Beausoleil S.A."/>
            <person name="Villen J."/>
            <person name="Haas W."/>
            <person name="Sowa M.E."/>
            <person name="Gygi S.P."/>
        </authorList>
    </citation>
    <scope>IDENTIFICATION BY MASS SPECTROMETRY [LARGE SCALE ANALYSIS]</scope>
    <source>
        <tissue>Brain</tissue>
        <tissue>Brown adipose tissue</tissue>
        <tissue>Heart</tissue>
        <tissue>Kidney</tissue>
        <tissue>Liver</tissue>
        <tissue>Lung</tissue>
        <tissue>Pancreas</tissue>
        <tissue>Spleen</tissue>
        <tissue>Testis</tissue>
    </source>
</reference>
<reference key="6">
    <citation type="journal article" date="2010" name="Mol. Biol. Cell">
        <title>Septin 14 is involved in cortical neuronal migration via interaction with Septin 4.</title>
        <authorList>
            <person name="Shinoda T."/>
            <person name="Ito H."/>
            <person name="Sudo K."/>
            <person name="Iwamoto I."/>
            <person name="Morishita R."/>
            <person name="Nagata K."/>
        </authorList>
    </citation>
    <scope>TISSUE SPECIFICITY</scope>
</reference>
<organism>
    <name type="scientific">Mus musculus</name>
    <name type="common">Mouse</name>
    <dbReference type="NCBI Taxonomy" id="10090"/>
    <lineage>
        <taxon>Eukaryota</taxon>
        <taxon>Metazoa</taxon>
        <taxon>Chordata</taxon>
        <taxon>Craniata</taxon>
        <taxon>Vertebrata</taxon>
        <taxon>Euteleostomi</taxon>
        <taxon>Mammalia</taxon>
        <taxon>Eutheria</taxon>
        <taxon>Euarchontoglires</taxon>
        <taxon>Glires</taxon>
        <taxon>Rodentia</taxon>
        <taxon>Myomorpha</taxon>
        <taxon>Muroidea</taxon>
        <taxon>Muridae</taxon>
        <taxon>Murinae</taxon>
        <taxon>Mus</taxon>
        <taxon>Mus</taxon>
    </lineage>
</organism>
<proteinExistence type="evidence at protein level"/>
<name>SEP11_MOUSE</name>